<evidence type="ECO:0000255" key="1">
    <source>
        <dbReference type="HAMAP-Rule" id="MF_00056"/>
    </source>
</evidence>
<accession>A1K7F7</accession>
<reference key="1">
    <citation type="journal article" date="2006" name="Nat. Biotechnol.">
        <title>Complete genome of the mutualistic, N2-fixing grass endophyte Azoarcus sp. strain BH72.</title>
        <authorList>
            <person name="Krause A."/>
            <person name="Ramakumar A."/>
            <person name="Bartels D."/>
            <person name="Battistoni F."/>
            <person name="Bekel T."/>
            <person name="Boch J."/>
            <person name="Boehm M."/>
            <person name="Friedrich F."/>
            <person name="Hurek T."/>
            <person name="Krause L."/>
            <person name="Linke B."/>
            <person name="McHardy A.C."/>
            <person name="Sarkar A."/>
            <person name="Schneiker S."/>
            <person name="Syed A.A."/>
            <person name="Thauer R."/>
            <person name="Vorhoelter F.-J."/>
            <person name="Weidner S."/>
            <person name="Puehler A."/>
            <person name="Reinhold-Hurek B."/>
            <person name="Kaiser O."/>
            <person name="Goesmann A."/>
        </authorList>
    </citation>
    <scope>NUCLEOTIDE SEQUENCE [LARGE SCALE GENOMIC DNA]</scope>
    <source>
        <strain>BH72</strain>
    </source>
</reference>
<sequence length="279" mass="29606">MNLCGFEVGLDKPVFLIAGPCVIESREMAFETAGALKDICAEVGIPFIYKSSYDKANRSSGKSYRGMGMEKGLDILADVKKQLGVPVLTDVHSIEEIPAVAAVVDVLQTPAFLCRQTDFIHAVASCGRPVNIKKGQFLAPGDMKNVVDKAREANGGADNIMVCERGASFGYNNLVSDMRSLAIMRETGCPVVFDATHSVQLPGGQGTASGGQREFVPVLARAAVAVGVAGLFMETHPNPAQALSDGPNAWPLPRMKALLSTLKAIDELVKSRGLLETEA</sequence>
<gene>
    <name evidence="1" type="primary">kdsA</name>
    <name type="ordered locus">azo2145</name>
</gene>
<proteinExistence type="inferred from homology"/>
<comment type="catalytic activity">
    <reaction evidence="1">
        <text>D-arabinose 5-phosphate + phosphoenolpyruvate + H2O = 3-deoxy-alpha-D-manno-2-octulosonate-8-phosphate + phosphate</text>
        <dbReference type="Rhea" id="RHEA:14053"/>
        <dbReference type="ChEBI" id="CHEBI:15377"/>
        <dbReference type="ChEBI" id="CHEBI:43474"/>
        <dbReference type="ChEBI" id="CHEBI:57693"/>
        <dbReference type="ChEBI" id="CHEBI:58702"/>
        <dbReference type="ChEBI" id="CHEBI:85985"/>
        <dbReference type="EC" id="2.5.1.55"/>
    </reaction>
</comment>
<comment type="pathway">
    <text evidence="1">Carbohydrate biosynthesis; 3-deoxy-D-manno-octulosonate biosynthesis; 3-deoxy-D-manno-octulosonate from D-ribulose 5-phosphate: step 2/3.</text>
</comment>
<comment type="pathway">
    <text evidence="1">Bacterial outer membrane biogenesis; lipopolysaccharide biosynthesis.</text>
</comment>
<comment type="subcellular location">
    <subcellularLocation>
        <location evidence="1">Cytoplasm</location>
    </subcellularLocation>
</comment>
<comment type="similarity">
    <text evidence="1">Belongs to the KdsA family.</text>
</comment>
<name>KDSA_AZOSB</name>
<keyword id="KW-0963">Cytoplasm</keyword>
<keyword id="KW-0448">Lipopolysaccharide biosynthesis</keyword>
<keyword id="KW-1185">Reference proteome</keyword>
<keyword id="KW-0808">Transferase</keyword>
<organism>
    <name type="scientific">Azoarcus sp. (strain BH72)</name>
    <dbReference type="NCBI Taxonomy" id="418699"/>
    <lineage>
        <taxon>Bacteria</taxon>
        <taxon>Pseudomonadati</taxon>
        <taxon>Pseudomonadota</taxon>
        <taxon>Betaproteobacteria</taxon>
        <taxon>Rhodocyclales</taxon>
        <taxon>Zoogloeaceae</taxon>
        <taxon>Azoarcus</taxon>
    </lineage>
</organism>
<protein>
    <recommendedName>
        <fullName evidence="1">2-dehydro-3-deoxyphosphooctonate aldolase</fullName>
        <ecNumber evidence="1">2.5.1.55</ecNumber>
    </recommendedName>
    <alternativeName>
        <fullName evidence="1">3-deoxy-D-manno-octulosonic acid 8-phosphate synthase</fullName>
    </alternativeName>
    <alternativeName>
        <fullName evidence="1">KDO-8-phosphate synthase</fullName>
        <shortName evidence="1">KDO 8-P synthase</shortName>
        <shortName evidence="1">KDOPS</shortName>
    </alternativeName>
    <alternativeName>
        <fullName evidence="1">Phospho-2-dehydro-3-deoxyoctonate aldolase</fullName>
    </alternativeName>
</protein>
<feature type="chain" id="PRO_0000304430" description="2-dehydro-3-deoxyphosphooctonate aldolase">
    <location>
        <begin position="1"/>
        <end position="279"/>
    </location>
</feature>
<dbReference type="EC" id="2.5.1.55" evidence="1"/>
<dbReference type="EMBL" id="AM406670">
    <property type="protein sequence ID" value="CAL94762.1"/>
    <property type="molecule type" value="Genomic_DNA"/>
</dbReference>
<dbReference type="RefSeq" id="WP_011765876.1">
    <property type="nucleotide sequence ID" value="NC_008702.1"/>
</dbReference>
<dbReference type="SMR" id="A1K7F7"/>
<dbReference type="STRING" id="62928.azo2145"/>
<dbReference type="KEGG" id="azo:azo2145"/>
<dbReference type="eggNOG" id="COG2877">
    <property type="taxonomic scope" value="Bacteria"/>
</dbReference>
<dbReference type="HOGENOM" id="CLU_036666_0_0_4"/>
<dbReference type="UniPathway" id="UPA00030"/>
<dbReference type="UniPathway" id="UPA00357">
    <property type="reaction ID" value="UER00474"/>
</dbReference>
<dbReference type="Proteomes" id="UP000002588">
    <property type="component" value="Chromosome"/>
</dbReference>
<dbReference type="GO" id="GO:0005737">
    <property type="term" value="C:cytoplasm"/>
    <property type="evidence" value="ECO:0007669"/>
    <property type="project" value="UniProtKB-SubCell"/>
</dbReference>
<dbReference type="GO" id="GO:0008676">
    <property type="term" value="F:3-deoxy-8-phosphooctulonate synthase activity"/>
    <property type="evidence" value="ECO:0007669"/>
    <property type="project" value="UniProtKB-UniRule"/>
</dbReference>
<dbReference type="GO" id="GO:0019294">
    <property type="term" value="P:keto-3-deoxy-D-manno-octulosonic acid biosynthetic process"/>
    <property type="evidence" value="ECO:0007669"/>
    <property type="project" value="UniProtKB-UniRule"/>
</dbReference>
<dbReference type="Gene3D" id="3.20.20.70">
    <property type="entry name" value="Aldolase class I"/>
    <property type="match status" value="1"/>
</dbReference>
<dbReference type="HAMAP" id="MF_00056">
    <property type="entry name" value="KDO8P_synth"/>
    <property type="match status" value="1"/>
</dbReference>
<dbReference type="InterPro" id="IPR013785">
    <property type="entry name" value="Aldolase_TIM"/>
</dbReference>
<dbReference type="InterPro" id="IPR006218">
    <property type="entry name" value="DAHP1/KDSA"/>
</dbReference>
<dbReference type="InterPro" id="IPR006269">
    <property type="entry name" value="KDO8P_synthase"/>
</dbReference>
<dbReference type="NCBIfam" id="TIGR01362">
    <property type="entry name" value="KDO8P_synth"/>
    <property type="match status" value="1"/>
</dbReference>
<dbReference type="NCBIfam" id="NF003543">
    <property type="entry name" value="PRK05198.1"/>
    <property type="match status" value="1"/>
</dbReference>
<dbReference type="PANTHER" id="PTHR21057">
    <property type="entry name" value="PHOSPHO-2-DEHYDRO-3-DEOXYHEPTONATE ALDOLASE"/>
    <property type="match status" value="1"/>
</dbReference>
<dbReference type="Pfam" id="PF00793">
    <property type="entry name" value="DAHP_synth_1"/>
    <property type="match status" value="1"/>
</dbReference>
<dbReference type="SUPFAM" id="SSF51569">
    <property type="entry name" value="Aldolase"/>
    <property type="match status" value="1"/>
</dbReference>